<keyword id="KW-0963">Cytoplasm</keyword>
<keyword id="KW-0653">Protein transport</keyword>
<keyword id="KW-1185">Reference proteome</keyword>
<keyword id="KW-0813">Transport</keyword>
<gene>
    <name type="primary">NTF2</name>
    <name type="ordered locus">ADR013W</name>
</gene>
<evidence type="ECO:0000250" key="1"/>
<evidence type="ECO:0000255" key="2">
    <source>
        <dbReference type="PROSITE-ProRule" id="PRU00137"/>
    </source>
</evidence>
<organism>
    <name type="scientific">Eremothecium gossypii (strain ATCC 10895 / CBS 109.51 / FGSC 9923 / NRRL Y-1056)</name>
    <name type="common">Yeast</name>
    <name type="synonym">Ashbya gossypii</name>
    <dbReference type="NCBI Taxonomy" id="284811"/>
    <lineage>
        <taxon>Eukaryota</taxon>
        <taxon>Fungi</taxon>
        <taxon>Dikarya</taxon>
        <taxon>Ascomycota</taxon>
        <taxon>Saccharomycotina</taxon>
        <taxon>Saccharomycetes</taxon>
        <taxon>Saccharomycetales</taxon>
        <taxon>Saccharomycetaceae</taxon>
        <taxon>Eremothecium</taxon>
    </lineage>
</organism>
<feature type="chain" id="PRO_0000194782" description="Nuclear transport factor 2">
    <location>
        <begin position="1"/>
        <end position="125"/>
    </location>
</feature>
<feature type="domain" description="NTF2" evidence="2">
    <location>
        <begin position="8"/>
        <end position="121"/>
    </location>
</feature>
<reference key="1">
    <citation type="journal article" date="2004" name="Science">
        <title>The Ashbya gossypii genome as a tool for mapping the ancient Saccharomyces cerevisiae genome.</title>
        <authorList>
            <person name="Dietrich F.S."/>
            <person name="Voegeli S."/>
            <person name="Brachat S."/>
            <person name="Lerch A."/>
            <person name="Gates K."/>
            <person name="Steiner S."/>
            <person name="Mohr C."/>
            <person name="Poehlmann R."/>
            <person name="Luedi P."/>
            <person name="Choi S."/>
            <person name="Wing R.A."/>
            <person name="Flavier A."/>
            <person name="Gaffney T.D."/>
            <person name="Philippsen P."/>
        </authorList>
    </citation>
    <scope>NUCLEOTIDE SEQUENCE [LARGE SCALE GENOMIC DNA]</scope>
    <source>
        <strain>ATCC 10895 / CBS 109.51 / FGSC 9923 / NRRL Y-1056</strain>
    </source>
</reference>
<reference key="2">
    <citation type="journal article" date="2013" name="G3 (Bethesda)">
        <title>Genomes of Ashbya fungi isolated from insects reveal four mating-type loci, numerous translocations, lack of transposons, and distinct gene duplications.</title>
        <authorList>
            <person name="Dietrich F.S."/>
            <person name="Voegeli S."/>
            <person name="Kuo S."/>
            <person name="Philippsen P."/>
        </authorList>
    </citation>
    <scope>GENOME REANNOTATION</scope>
    <source>
        <strain>ATCC 10895 / CBS 109.51 / FGSC 9923 / NRRL Y-1056</strain>
    </source>
</reference>
<sequence>MSMDFSALAQQFTEFYYNQFDTDRSQLGNLYRDQSMLTFETSQLQGAKDIVEKLVSLPFQKVQHRITTLDAQPASPNGDVLVMITGDLLIDDEQNAQRFSQVFHLMPEGNSYYVFNDIFRLNYSA</sequence>
<dbReference type="EMBL" id="AE016817">
    <property type="protein sequence ID" value="AAS51933.1"/>
    <property type="molecule type" value="Genomic_DNA"/>
</dbReference>
<dbReference type="RefSeq" id="NP_984109.1">
    <property type="nucleotide sequence ID" value="NM_209462.1"/>
</dbReference>
<dbReference type="SMR" id="Q75AA5"/>
<dbReference type="FunCoup" id="Q75AA5">
    <property type="interactions" value="1235"/>
</dbReference>
<dbReference type="STRING" id="284811.Q75AA5"/>
<dbReference type="EnsemblFungi" id="AAS51933">
    <property type="protein sequence ID" value="AAS51933"/>
    <property type="gene ID" value="AGOS_ADR013W"/>
</dbReference>
<dbReference type="GeneID" id="4620258"/>
<dbReference type="KEGG" id="ago:AGOS_ADR013W"/>
<dbReference type="eggNOG" id="KOG2104">
    <property type="taxonomic scope" value="Eukaryota"/>
</dbReference>
<dbReference type="HOGENOM" id="CLU_131642_0_0_1"/>
<dbReference type="InParanoid" id="Q75AA5"/>
<dbReference type="OMA" id="QFVEYYY"/>
<dbReference type="OrthoDB" id="6507044at2759"/>
<dbReference type="Proteomes" id="UP000000591">
    <property type="component" value="Chromosome IV"/>
</dbReference>
<dbReference type="GO" id="GO:0005737">
    <property type="term" value="C:cytoplasm"/>
    <property type="evidence" value="ECO:0007669"/>
    <property type="project" value="UniProtKB-SubCell"/>
</dbReference>
<dbReference type="GO" id="GO:0044613">
    <property type="term" value="C:nuclear pore central transport channel"/>
    <property type="evidence" value="ECO:0000318"/>
    <property type="project" value="GO_Central"/>
</dbReference>
<dbReference type="GO" id="GO:0061608">
    <property type="term" value="F:nuclear import signal receptor activity"/>
    <property type="evidence" value="ECO:0000318"/>
    <property type="project" value="GO_Central"/>
</dbReference>
<dbReference type="GO" id="GO:0031267">
    <property type="term" value="F:small GTPase binding"/>
    <property type="evidence" value="ECO:0007669"/>
    <property type="project" value="EnsemblFungi"/>
</dbReference>
<dbReference type="GO" id="GO:0006606">
    <property type="term" value="P:protein import into nucleus"/>
    <property type="evidence" value="ECO:0000318"/>
    <property type="project" value="GO_Central"/>
</dbReference>
<dbReference type="CDD" id="cd00780">
    <property type="entry name" value="NTF2"/>
    <property type="match status" value="1"/>
</dbReference>
<dbReference type="FunFam" id="3.10.450.50:FF:000005">
    <property type="entry name" value="Nuclear transport factor 2"/>
    <property type="match status" value="1"/>
</dbReference>
<dbReference type="Gene3D" id="3.10.450.50">
    <property type="match status" value="1"/>
</dbReference>
<dbReference type="InterPro" id="IPR045875">
    <property type="entry name" value="NTF2"/>
</dbReference>
<dbReference type="InterPro" id="IPR032710">
    <property type="entry name" value="NTF2-like_dom_sf"/>
</dbReference>
<dbReference type="InterPro" id="IPR002075">
    <property type="entry name" value="NTF2_dom"/>
</dbReference>
<dbReference type="InterPro" id="IPR018222">
    <property type="entry name" value="Nuclear_transport_factor_2_euk"/>
</dbReference>
<dbReference type="PANTHER" id="PTHR12612">
    <property type="entry name" value="NUCLEAR TRANSPORT FACTOR 2"/>
    <property type="match status" value="1"/>
</dbReference>
<dbReference type="Pfam" id="PF02136">
    <property type="entry name" value="NTF2"/>
    <property type="match status" value="1"/>
</dbReference>
<dbReference type="SUPFAM" id="SSF54427">
    <property type="entry name" value="NTF2-like"/>
    <property type="match status" value="1"/>
</dbReference>
<dbReference type="PROSITE" id="PS50177">
    <property type="entry name" value="NTF2_DOMAIN"/>
    <property type="match status" value="1"/>
</dbReference>
<name>NTF2_EREGS</name>
<proteinExistence type="inferred from homology"/>
<comment type="function">
    <text evidence="1">Facilitates protein transport into the nucleus. Could be part of a multicomponent system of cytosolic factors that assemble at the pore complex during nuclear import (By similarity).</text>
</comment>
<comment type="subcellular location">
    <subcellularLocation>
        <location evidence="1">Cytoplasm</location>
    </subcellularLocation>
</comment>
<protein>
    <recommendedName>
        <fullName>Nuclear transport factor 2</fullName>
        <shortName>NTF-2</shortName>
    </recommendedName>
</protein>
<accession>Q75AA5</accession>